<comment type="function">
    <text evidence="1">Activates PI3K and concomitantly recruits the WAVE1 complex to the close vicinity of PI3K and regulates neuronal morphogenesis.</text>
</comment>
<comment type="subunit">
    <text evidence="1">Interacts with ACOT9, ARHGAP26 and PIK3R2. Interacts with components of the WAVE1 complex, CYFIP1 and NCKAP1; this interaction mediates PI3K-WAVE1 association and actin cytoskeleton remodeling (By similarity).</text>
</comment>
<comment type="alternative products">
    <event type="alternative splicing"/>
    <isoform>
        <id>Q6ZVC0-1</id>
        <name>1</name>
        <sequence type="displayed"/>
    </isoform>
    <isoform>
        <id>Q6ZVC0-2</id>
        <name>2</name>
        <sequence type="described" ref="VSP_031746"/>
    </isoform>
</comment>
<comment type="PTM">
    <text evidence="1">Phosphorylated on tyrosine residues by FYN upon stimulation with CNTN5.</text>
</comment>
<comment type="similarity">
    <text evidence="4">Belongs to the NYAP family.</text>
</comment>
<comment type="sequence caution" evidence="4">
    <conflict type="erroneous initiation">
        <sequence resource="EMBL-CDS" id="BAC04437"/>
    </conflict>
    <text>Truncated N-terminus.</text>
</comment>
<dbReference type="EMBL" id="AK094857">
    <property type="protein sequence ID" value="BAC04437.1"/>
    <property type="status" value="ALT_INIT"/>
    <property type="molecule type" value="mRNA"/>
</dbReference>
<dbReference type="EMBL" id="AK124773">
    <property type="protein sequence ID" value="BAC85942.1"/>
    <property type="molecule type" value="mRNA"/>
</dbReference>
<dbReference type="EMBL" id="CH236956">
    <property type="protein sequence ID" value="EAL23830.1"/>
    <property type="molecule type" value="Genomic_DNA"/>
</dbReference>
<dbReference type="EMBL" id="AY375450">
    <property type="protein sequence ID" value="AAQ83634.1"/>
    <property type="molecule type" value="mRNA"/>
</dbReference>
<dbReference type="CCDS" id="CCDS5696.1">
    <molecule id="Q6ZVC0-1"/>
</dbReference>
<dbReference type="RefSeq" id="NP_775835.2">
    <molecule id="Q6ZVC0-1"/>
    <property type="nucleotide sequence ID" value="NM_173564.3"/>
</dbReference>
<dbReference type="RefSeq" id="XP_006715970.1">
    <property type="nucleotide sequence ID" value="XM_006715907.3"/>
</dbReference>
<dbReference type="BioGRID" id="128821">
    <property type="interactions" value="11"/>
</dbReference>
<dbReference type="FunCoup" id="Q6ZVC0">
    <property type="interactions" value="326"/>
</dbReference>
<dbReference type="IntAct" id="Q6ZVC0">
    <property type="interactions" value="8"/>
</dbReference>
<dbReference type="STRING" id="9606.ENSP00000300179"/>
<dbReference type="CarbonylDB" id="Q6ZVC0"/>
<dbReference type="GlyGen" id="Q6ZVC0">
    <property type="glycosylation" value="3 sites"/>
</dbReference>
<dbReference type="iPTMnet" id="Q6ZVC0"/>
<dbReference type="PhosphoSitePlus" id="Q6ZVC0"/>
<dbReference type="BioMuta" id="NYAP1"/>
<dbReference type="DMDM" id="74712216"/>
<dbReference type="jPOST" id="Q6ZVC0"/>
<dbReference type="MassIVE" id="Q6ZVC0"/>
<dbReference type="PaxDb" id="9606-ENSP00000300179"/>
<dbReference type="PeptideAtlas" id="Q6ZVC0"/>
<dbReference type="ProteomicsDB" id="68404">
    <molecule id="Q6ZVC0-1"/>
</dbReference>
<dbReference type="ProteomicsDB" id="68405">
    <molecule id="Q6ZVC0-2"/>
</dbReference>
<dbReference type="Antibodypedia" id="16487">
    <property type="antibodies" value="10 antibodies from 9 providers"/>
</dbReference>
<dbReference type="DNASU" id="222950"/>
<dbReference type="Ensembl" id="ENST00000300179.7">
    <molecule id="Q6ZVC0-1"/>
    <property type="protein sequence ID" value="ENSP00000300179.2"/>
    <property type="gene ID" value="ENSG00000166924.9"/>
</dbReference>
<dbReference type="GeneID" id="222950"/>
<dbReference type="KEGG" id="hsa:222950"/>
<dbReference type="MANE-Select" id="ENST00000300179.7">
    <property type="protein sequence ID" value="ENSP00000300179.2"/>
    <property type="RefSeq nucleotide sequence ID" value="NM_173564.4"/>
    <property type="RefSeq protein sequence ID" value="NP_775835.2"/>
</dbReference>
<dbReference type="UCSC" id="uc003uvd.3">
    <molecule id="Q6ZVC0-1"/>
    <property type="organism name" value="human"/>
</dbReference>
<dbReference type="AGR" id="HGNC:22009"/>
<dbReference type="CTD" id="222950"/>
<dbReference type="DisGeNET" id="222950"/>
<dbReference type="GeneCards" id="NYAP1"/>
<dbReference type="HGNC" id="HGNC:22009">
    <property type="gene designation" value="NYAP1"/>
</dbReference>
<dbReference type="HPA" id="ENSG00000166924">
    <property type="expression patterns" value="Tissue enhanced (brain, pituitary gland)"/>
</dbReference>
<dbReference type="MIM" id="615477">
    <property type="type" value="gene"/>
</dbReference>
<dbReference type="neXtProt" id="NX_Q6ZVC0"/>
<dbReference type="OpenTargets" id="ENSG00000166924"/>
<dbReference type="PharmGKB" id="PA162380561"/>
<dbReference type="VEuPathDB" id="HostDB:ENSG00000166924"/>
<dbReference type="eggNOG" id="ENOG502QRSX">
    <property type="taxonomic scope" value="Eukaryota"/>
</dbReference>
<dbReference type="GeneTree" id="ENSGT00890000139453"/>
<dbReference type="InParanoid" id="Q6ZVC0"/>
<dbReference type="OMA" id="MICPKAV"/>
<dbReference type="OrthoDB" id="9832999at2759"/>
<dbReference type="PAN-GO" id="Q6ZVC0">
    <property type="GO annotations" value="2 GO annotations based on evolutionary models"/>
</dbReference>
<dbReference type="PhylomeDB" id="Q6ZVC0"/>
<dbReference type="PathwayCommons" id="Q6ZVC0"/>
<dbReference type="SignaLink" id="Q6ZVC0"/>
<dbReference type="BioGRID-ORCS" id="222950">
    <property type="hits" value="34 hits in 1142 CRISPR screens"/>
</dbReference>
<dbReference type="ChiTaRS" id="NYAP1">
    <property type="organism name" value="human"/>
</dbReference>
<dbReference type="GenomeRNAi" id="222950"/>
<dbReference type="Pharos" id="Q6ZVC0">
    <property type="development level" value="Tdark"/>
</dbReference>
<dbReference type="PRO" id="PR:Q6ZVC0"/>
<dbReference type="Proteomes" id="UP000005640">
    <property type="component" value="Chromosome 7"/>
</dbReference>
<dbReference type="RNAct" id="Q6ZVC0">
    <property type="molecule type" value="protein"/>
</dbReference>
<dbReference type="Bgee" id="ENSG00000166924">
    <property type="expression patterns" value="Expressed in cortical plate and 96 other cell types or tissues"/>
</dbReference>
<dbReference type="ExpressionAtlas" id="Q6ZVC0">
    <property type="expression patterns" value="baseline and differential"/>
</dbReference>
<dbReference type="GO" id="GO:0048812">
    <property type="term" value="P:neuron projection morphogenesis"/>
    <property type="evidence" value="ECO:0000250"/>
    <property type="project" value="UniProtKB"/>
</dbReference>
<dbReference type="GO" id="GO:0043491">
    <property type="term" value="P:phosphatidylinositol 3-kinase/protein kinase B signal transduction"/>
    <property type="evidence" value="ECO:0000250"/>
    <property type="project" value="UniProtKB"/>
</dbReference>
<dbReference type="InterPro" id="IPR026722">
    <property type="entry name" value="NYAP1/NYAP2"/>
</dbReference>
<dbReference type="InterPro" id="IPR029353">
    <property type="entry name" value="NYAP_C"/>
</dbReference>
<dbReference type="InterPro" id="IPR039482">
    <property type="entry name" value="NYAP_N"/>
</dbReference>
<dbReference type="PANTHER" id="PTHR22633:SF2">
    <property type="entry name" value="NEURONAL TYROSINE-PHOSPHORYLATED PHOSPHOINOSITIDE-3-KINASE ADAPTER 1"/>
    <property type="match status" value="1"/>
</dbReference>
<dbReference type="PANTHER" id="PTHR22633">
    <property type="entry name" value="NEURONAL TYROSINE-PHOSPHORYLATED PHOSPHOINOSITIDE-3-KINASE ADAPTER 2-RELATED"/>
    <property type="match status" value="1"/>
</dbReference>
<dbReference type="Pfam" id="PF15452">
    <property type="entry name" value="NYAP_C"/>
    <property type="match status" value="1"/>
</dbReference>
<dbReference type="Pfam" id="PF15439">
    <property type="entry name" value="NYAP_N"/>
    <property type="match status" value="1"/>
</dbReference>
<reference key="1">
    <citation type="journal article" date="2004" name="Nat. Genet.">
        <title>Complete sequencing and characterization of 21,243 full-length human cDNAs.</title>
        <authorList>
            <person name="Ota T."/>
            <person name="Suzuki Y."/>
            <person name="Nishikawa T."/>
            <person name="Otsuki T."/>
            <person name="Sugiyama T."/>
            <person name="Irie R."/>
            <person name="Wakamatsu A."/>
            <person name="Hayashi K."/>
            <person name="Sato H."/>
            <person name="Nagai K."/>
            <person name="Kimura K."/>
            <person name="Makita H."/>
            <person name="Sekine M."/>
            <person name="Obayashi M."/>
            <person name="Nishi T."/>
            <person name="Shibahara T."/>
            <person name="Tanaka T."/>
            <person name="Ishii S."/>
            <person name="Yamamoto J."/>
            <person name="Saito K."/>
            <person name="Kawai Y."/>
            <person name="Isono Y."/>
            <person name="Nakamura Y."/>
            <person name="Nagahari K."/>
            <person name="Murakami K."/>
            <person name="Yasuda T."/>
            <person name="Iwayanagi T."/>
            <person name="Wagatsuma M."/>
            <person name="Shiratori A."/>
            <person name="Sudo H."/>
            <person name="Hosoiri T."/>
            <person name="Kaku Y."/>
            <person name="Kodaira H."/>
            <person name="Kondo H."/>
            <person name="Sugawara M."/>
            <person name="Takahashi M."/>
            <person name="Kanda K."/>
            <person name="Yokoi T."/>
            <person name="Furuya T."/>
            <person name="Kikkawa E."/>
            <person name="Omura Y."/>
            <person name="Abe K."/>
            <person name="Kamihara K."/>
            <person name="Katsuta N."/>
            <person name="Sato K."/>
            <person name="Tanikawa M."/>
            <person name="Yamazaki M."/>
            <person name="Ninomiya K."/>
            <person name="Ishibashi T."/>
            <person name="Yamashita H."/>
            <person name="Murakawa K."/>
            <person name="Fujimori K."/>
            <person name="Tanai H."/>
            <person name="Kimata M."/>
            <person name="Watanabe M."/>
            <person name="Hiraoka S."/>
            <person name="Chiba Y."/>
            <person name="Ishida S."/>
            <person name="Ono Y."/>
            <person name="Takiguchi S."/>
            <person name="Watanabe S."/>
            <person name="Yosida M."/>
            <person name="Hotuta T."/>
            <person name="Kusano J."/>
            <person name="Kanehori K."/>
            <person name="Takahashi-Fujii A."/>
            <person name="Hara H."/>
            <person name="Tanase T.-O."/>
            <person name="Nomura Y."/>
            <person name="Togiya S."/>
            <person name="Komai F."/>
            <person name="Hara R."/>
            <person name="Takeuchi K."/>
            <person name="Arita M."/>
            <person name="Imose N."/>
            <person name="Musashino K."/>
            <person name="Yuuki H."/>
            <person name="Oshima A."/>
            <person name="Sasaki N."/>
            <person name="Aotsuka S."/>
            <person name="Yoshikawa Y."/>
            <person name="Matsunawa H."/>
            <person name="Ichihara T."/>
            <person name="Shiohata N."/>
            <person name="Sano S."/>
            <person name="Moriya S."/>
            <person name="Momiyama H."/>
            <person name="Satoh N."/>
            <person name="Takami S."/>
            <person name="Terashima Y."/>
            <person name="Suzuki O."/>
            <person name="Nakagawa S."/>
            <person name="Senoh A."/>
            <person name="Mizoguchi H."/>
            <person name="Goto Y."/>
            <person name="Shimizu F."/>
            <person name="Wakebe H."/>
            <person name="Hishigaki H."/>
            <person name="Watanabe T."/>
            <person name="Sugiyama A."/>
            <person name="Takemoto M."/>
            <person name="Kawakami B."/>
            <person name="Yamazaki M."/>
            <person name="Watanabe K."/>
            <person name="Kumagai A."/>
            <person name="Itakura S."/>
            <person name="Fukuzumi Y."/>
            <person name="Fujimori Y."/>
            <person name="Komiyama M."/>
            <person name="Tashiro H."/>
            <person name="Tanigami A."/>
            <person name="Fujiwara T."/>
            <person name="Ono T."/>
            <person name="Yamada K."/>
            <person name="Fujii Y."/>
            <person name="Ozaki K."/>
            <person name="Hirao M."/>
            <person name="Ohmori Y."/>
            <person name="Kawabata A."/>
            <person name="Hikiji T."/>
            <person name="Kobatake N."/>
            <person name="Inagaki H."/>
            <person name="Ikema Y."/>
            <person name="Okamoto S."/>
            <person name="Okitani R."/>
            <person name="Kawakami T."/>
            <person name="Noguchi S."/>
            <person name="Itoh T."/>
            <person name="Shigeta K."/>
            <person name="Senba T."/>
            <person name="Matsumura K."/>
            <person name="Nakajima Y."/>
            <person name="Mizuno T."/>
            <person name="Morinaga M."/>
            <person name="Sasaki M."/>
            <person name="Togashi T."/>
            <person name="Oyama M."/>
            <person name="Hata H."/>
            <person name="Watanabe M."/>
            <person name="Komatsu T."/>
            <person name="Mizushima-Sugano J."/>
            <person name="Satoh T."/>
            <person name="Shirai Y."/>
            <person name="Takahashi Y."/>
            <person name="Nakagawa K."/>
            <person name="Okumura K."/>
            <person name="Nagase T."/>
            <person name="Nomura N."/>
            <person name="Kikuchi H."/>
            <person name="Masuho Y."/>
            <person name="Yamashita R."/>
            <person name="Nakai K."/>
            <person name="Yada T."/>
            <person name="Nakamura Y."/>
            <person name="Ohara O."/>
            <person name="Isogai T."/>
            <person name="Sugano S."/>
        </authorList>
    </citation>
    <scope>NUCLEOTIDE SEQUENCE [LARGE SCALE MRNA] (ISOFORM 1)</scope>
    <source>
        <tissue>Brain</tissue>
        <tissue>Caudate nucleus</tissue>
    </source>
</reference>
<reference key="2">
    <citation type="journal article" date="2003" name="Science">
        <title>Human chromosome 7: DNA sequence and biology.</title>
        <authorList>
            <person name="Scherer S.W."/>
            <person name="Cheung J."/>
            <person name="MacDonald J.R."/>
            <person name="Osborne L.R."/>
            <person name="Nakabayashi K."/>
            <person name="Herbrick J.-A."/>
            <person name="Carson A.R."/>
            <person name="Parker-Katiraee L."/>
            <person name="Skaug J."/>
            <person name="Khaja R."/>
            <person name="Zhang J."/>
            <person name="Hudek A.K."/>
            <person name="Li M."/>
            <person name="Haddad M."/>
            <person name="Duggan G.E."/>
            <person name="Fernandez B.A."/>
            <person name="Kanematsu E."/>
            <person name="Gentles S."/>
            <person name="Christopoulos C.C."/>
            <person name="Choufani S."/>
            <person name="Kwasnicka D."/>
            <person name="Zheng X.H."/>
            <person name="Lai Z."/>
            <person name="Nusskern D.R."/>
            <person name="Zhang Q."/>
            <person name="Gu Z."/>
            <person name="Lu F."/>
            <person name="Zeesman S."/>
            <person name="Nowaczyk M.J."/>
            <person name="Teshima I."/>
            <person name="Chitayat D."/>
            <person name="Shuman C."/>
            <person name="Weksberg R."/>
            <person name="Zackai E.H."/>
            <person name="Grebe T.A."/>
            <person name="Cox S.R."/>
            <person name="Kirkpatrick S.J."/>
            <person name="Rahman N."/>
            <person name="Friedman J.M."/>
            <person name="Heng H.H.Q."/>
            <person name="Pelicci P.G."/>
            <person name="Lo-Coco F."/>
            <person name="Belloni E."/>
            <person name="Shaffer L.G."/>
            <person name="Pober B."/>
            <person name="Morton C.C."/>
            <person name="Gusella J.F."/>
            <person name="Bruns G.A.P."/>
            <person name="Korf B.R."/>
            <person name="Quade B.J."/>
            <person name="Ligon A.H."/>
            <person name="Ferguson H."/>
            <person name="Higgins A.W."/>
            <person name="Leach N.T."/>
            <person name="Herrick S.R."/>
            <person name="Lemyre E."/>
            <person name="Farra C.G."/>
            <person name="Kim H.-G."/>
            <person name="Summers A.M."/>
            <person name="Gripp K.W."/>
            <person name="Roberts W."/>
            <person name="Szatmari P."/>
            <person name="Winsor E.J.T."/>
            <person name="Grzeschik K.-H."/>
            <person name="Teebi A."/>
            <person name="Minassian B.A."/>
            <person name="Kere J."/>
            <person name="Armengol L."/>
            <person name="Pujana M.A."/>
            <person name="Estivill X."/>
            <person name="Wilson M.D."/>
            <person name="Koop B.F."/>
            <person name="Tosi S."/>
            <person name="Moore G.E."/>
            <person name="Boright A.P."/>
            <person name="Zlotorynski E."/>
            <person name="Kerem B."/>
            <person name="Kroisel P.M."/>
            <person name="Petek E."/>
            <person name="Oscier D.G."/>
            <person name="Mould S.J."/>
            <person name="Doehner H."/>
            <person name="Doehner K."/>
            <person name="Rommens J.M."/>
            <person name="Vincent J.B."/>
            <person name="Venter J.C."/>
            <person name="Li P.W."/>
            <person name="Mural R.J."/>
            <person name="Adams M.D."/>
            <person name="Tsui L.-C."/>
        </authorList>
    </citation>
    <scope>NUCLEOTIDE SEQUENCE [LARGE SCALE GENOMIC DNA]</scope>
</reference>
<reference key="3">
    <citation type="submission" date="2003-08" db="EMBL/GenBank/DDBJ databases">
        <authorList>
            <person name="Zhou G."/>
            <person name="Yu R."/>
            <person name="Zhong G."/>
            <person name="Li H."/>
            <person name="Shen C."/>
            <person name="Ke R."/>
            <person name="Li M."/>
            <person name="Lin L."/>
            <person name="Yang S."/>
        </authorList>
    </citation>
    <scope>NUCLEOTIDE SEQUENCE [LARGE SCALE MRNA] OF 585-841 (ISOFORM 2)</scope>
</reference>
<protein>
    <recommendedName>
        <fullName>Neuronal tyrosine-phosphorylated phosphoinositide-3-kinase adapter 1</fullName>
    </recommendedName>
</protein>
<sequence length="841" mass="87928">MNLLYRKTKLEWRQHKEEEAKRSSSKEVAPAGSAGPAAGQGPGVRVRDIASLRRSLRMGFMTMPASQEHTPHPCRSAMAPRSLSCHSVGSMDSVGGGPGGASGGLTEDSSTRRPPAKPRRHPSTKLSMVGPGSGAETPPSKKAGSQKPTPEGRESSRKVPPQKPRRSPNTQLSVSFDESCPPGPSPRGGNLPLQRLTRGSRVAGDPDVGAQEEPVYIEMVGDVFRGGGRSGGGLAGPPLGGGGPTPPAGADSDSEESEAIYEEMKYPLPEEAGEGRANGPPPLTATSPPQQPHALPPHAHRRPASALPSRRDGTPTKTTPCEIPPPFPNLLQHRPPLLAFPQAKSASRTPGDGVSRLPVLCHSKEPAGSTPAPQVPARERETPPPPPPPPAANLLLLGPSGRARSHSTPLPPQGSGQPRGERELPNSHSMICPKAAGAPAAPPAPAALLPGPPKDKAVSYTMVYSAVKVTTHSVLPAGPPLGAGEPKTEKEISVLHGMLCTSSRPPVPGKTSPHGGAMGAAAGVLHHRGCLASPHSLPDPTVGPLTPLWTYPATAAGLKRPPAYESLKAGGVLNKGCGVGAPSPMVKIQLQEQGTDGGAFASISCAHVIASAGTPEEEEEEVGAATFGAGWALQRKVLYGGRKAKELDKVEDGARAWNGSAEGPGKVEREDRGPGTSGIPVRSQGAEGLLARIHHGDRGGSRTALPIPCQTFPACHRNGDFTGGYRLGRSASTSGVRQVVLHTPRPCSQPRDALSQPHPALPLPLPLPPQPARERDGKLLEVIERKRCVCKEIKARHRPDRGLCKQESMPILPSWRRGPEPRKSGTPPCRRQHTVLWDTAI</sequence>
<keyword id="KW-0025">Alternative splicing</keyword>
<keyword id="KW-0597">Phosphoprotein</keyword>
<keyword id="KW-1267">Proteomics identification</keyword>
<keyword id="KW-1185">Reference proteome</keyword>
<accession>Q6ZVC0</accession>
<accession>Q6U9Y3</accession>
<accession>Q8N1V0</accession>
<evidence type="ECO:0000250" key="1"/>
<evidence type="ECO:0000256" key="2">
    <source>
        <dbReference type="SAM" id="MobiDB-lite"/>
    </source>
</evidence>
<evidence type="ECO:0000303" key="3">
    <source ref="3"/>
</evidence>
<evidence type="ECO:0000305" key="4"/>
<proteinExistence type="evidence at protein level"/>
<gene>
    <name type="primary">NYAP1</name>
    <name type="synonym">C7orf51</name>
</gene>
<feature type="chain" id="PRO_0000320929" description="Neuronal tyrosine-phosphorylated phosphoinositide-3-kinase adapter 1">
    <location>
        <begin position="1"/>
        <end position="841"/>
    </location>
</feature>
<feature type="region of interest" description="Disordered" evidence="2">
    <location>
        <begin position="1"/>
        <end position="45"/>
    </location>
</feature>
<feature type="region of interest" description="Disordered" evidence="2">
    <location>
        <begin position="64"/>
        <end position="448"/>
    </location>
</feature>
<feature type="region of interest" description="Involved in CYFIP1- and NCKAP1-binding" evidence="1">
    <location>
        <begin position="76"/>
        <end position="186"/>
    </location>
</feature>
<feature type="region of interest" description="Disordered" evidence="2">
    <location>
        <begin position="655"/>
        <end position="679"/>
    </location>
</feature>
<feature type="region of interest" description="Disordered" evidence="2">
    <location>
        <begin position="745"/>
        <end position="769"/>
    </location>
</feature>
<feature type="region of interest" description="Disordered" evidence="2">
    <location>
        <begin position="812"/>
        <end position="833"/>
    </location>
</feature>
<feature type="compositionally biased region" description="Basic and acidic residues" evidence="2">
    <location>
        <begin position="8"/>
        <end position="25"/>
    </location>
</feature>
<feature type="compositionally biased region" description="Low complexity" evidence="2">
    <location>
        <begin position="26"/>
        <end position="39"/>
    </location>
</feature>
<feature type="compositionally biased region" description="Gly residues" evidence="2">
    <location>
        <begin position="94"/>
        <end position="103"/>
    </location>
</feature>
<feature type="compositionally biased region" description="Basic residues" evidence="2">
    <location>
        <begin position="114"/>
        <end position="123"/>
    </location>
</feature>
<feature type="compositionally biased region" description="Polar residues" evidence="2">
    <location>
        <begin position="167"/>
        <end position="176"/>
    </location>
</feature>
<feature type="compositionally biased region" description="Gly residues" evidence="2">
    <location>
        <begin position="224"/>
        <end position="243"/>
    </location>
</feature>
<feature type="compositionally biased region" description="Acidic residues" evidence="2">
    <location>
        <begin position="252"/>
        <end position="261"/>
    </location>
</feature>
<feature type="compositionally biased region" description="Pro residues" evidence="2">
    <location>
        <begin position="279"/>
        <end position="295"/>
    </location>
</feature>
<feature type="compositionally biased region" description="Pro residues" evidence="2">
    <location>
        <begin position="759"/>
        <end position="769"/>
    </location>
</feature>
<feature type="splice variant" id="VSP_031746" description="In isoform 2." evidence="3">
    <original>K</original>
    <variation>TE</variation>
    <location>
        <position position="649"/>
    </location>
</feature>
<feature type="sequence conflict" description="In Ref. 3; AAQ83634." evidence="4" ref="3">
    <original>I</original>
    <variation>V</variation>
    <location>
        <position position="707"/>
    </location>
</feature>
<name>NYAP1_HUMAN</name>
<organism>
    <name type="scientific">Homo sapiens</name>
    <name type="common">Human</name>
    <dbReference type="NCBI Taxonomy" id="9606"/>
    <lineage>
        <taxon>Eukaryota</taxon>
        <taxon>Metazoa</taxon>
        <taxon>Chordata</taxon>
        <taxon>Craniata</taxon>
        <taxon>Vertebrata</taxon>
        <taxon>Euteleostomi</taxon>
        <taxon>Mammalia</taxon>
        <taxon>Eutheria</taxon>
        <taxon>Euarchontoglires</taxon>
        <taxon>Primates</taxon>
        <taxon>Haplorrhini</taxon>
        <taxon>Catarrhini</taxon>
        <taxon>Hominidae</taxon>
        <taxon>Homo</taxon>
    </lineage>
</organism>